<name>ADA10_XENLA</name>
<comment type="function">
    <text evidence="1 10">Controls the proteolytic processing of Notch and mediates lateral inhibition during neurogenesis.</text>
</comment>
<comment type="catalytic activity">
    <reaction evidence="2">
        <text>Endopeptidase of broad specificity.</text>
        <dbReference type="EC" id="3.4.24.81"/>
    </reaction>
</comment>
<comment type="cofactor">
    <cofactor evidence="2">
        <name>Zn(2+)</name>
        <dbReference type="ChEBI" id="CHEBI:29105"/>
    </cofactor>
    <text evidence="2">Binds 1 zinc ion per subunit.</text>
</comment>
<comment type="subcellular location">
    <subcellularLocation>
        <location>Membrane</location>
        <topology>Single-pass type I membrane protein</topology>
    </subcellularLocation>
</comment>
<comment type="developmental stage">
    <text>Expressed maternally throughout the embryo and then becomes restricted to a pan-neural expression pattern.</text>
</comment>
<comment type="domain">
    <text>The conserved cysteine present in the cysteine-switch motif binds the catalytic zinc ion, thus inhibiting the enzyme. The dissociation of the cysteine from the zinc ion upon the activation-peptide release activates the enzyme.</text>
</comment>
<comment type="domain">
    <text evidence="3">The propeptide keeps the metalloprotease in a latent form via a cysteine switch mechanism. This mechanism may be mediated by a highly conserved cysteine (Cys-172) in the propeptide, which interacts and neutralizes the zinc-coordinating HEXGHXXGXXHD catalytic core of the metalloprotease domain. The dissociation of the cysteine from the zinc ion upon the activation-peptide release activates the enzyme.</text>
</comment>
<comment type="PTM">
    <text evidence="4">The precursor is cleaved by furin and PCSK7.</text>
</comment>
<gene>
    <name type="primary">adam10</name>
    <name type="synonym">kuz</name>
</gene>
<accession>Q8JIY1</accession>
<accession>O42568</accession>
<feature type="signal peptide" evidence="5">
    <location>
        <begin position="1"/>
        <end position="18"/>
    </location>
</feature>
<feature type="propeptide" id="PRO_0000029072" evidence="4">
    <location>
        <begin position="19"/>
        <end position="213"/>
    </location>
</feature>
<feature type="chain" id="PRO_0000029073" description="Disintegrin and metalloproteinase domain-containing protein 10">
    <location>
        <begin position="214"/>
        <end position="749"/>
    </location>
</feature>
<feature type="topological domain" description="Extracellular" evidence="5">
    <location>
        <begin position="19"/>
        <end position="673"/>
    </location>
</feature>
<feature type="transmembrane region" description="Helical" evidence="5">
    <location>
        <begin position="674"/>
        <end position="694"/>
    </location>
</feature>
<feature type="topological domain" description="Cytoplasmic" evidence="5">
    <location>
        <begin position="695"/>
        <end position="749"/>
    </location>
</feature>
<feature type="domain" description="Peptidase M12B" evidence="7">
    <location>
        <begin position="220"/>
        <end position="457"/>
    </location>
</feature>
<feature type="domain" description="Disintegrin" evidence="6">
    <location>
        <begin position="458"/>
        <end position="552"/>
    </location>
</feature>
<feature type="region of interest" description="Disordered" evidence="9">
    <location>
        <begin position="705"/>
        <end position="749"/>
    </location>
</feature>
<feature type="short sequence motif" description="Cysteine switch" evidence="11">
    <location>
        <begin position="170"/>
        <end position="177"/>
    </location>
</feature>
<feature type="short sequence motif" description="SH3-binding" evidence="5">
    <location>
        <begin position="709"/>
        <end position="716"/>
    </location>
</feature>
<feature type="short sequence motif" description="SH3-binding" evidence="5">
    <location>
        <begin position="723"/>
        <end position="729"/>
    </location>
</feature>
<feature type="active site" evidence="7 8">
    <location>
        <position position="385"/>
    </location>
</feature>
<feature type="binding site" description="in inhibited form" evidence="3">
    <location>
        <position position="172"/>
    </location>
    <ligand>
        <name>Zn(2+)</name>
        <dbReference type="ChEBI" id="CHEBI:29105"/>
        <note>catalytic</note>
    </ligand>
</feature>
<feature type="binding site" evidence="2">
    <location>
        <position position="384"/>
    </location>
    <ligand>
        <name>Zn(2+)</name>
        <dbReference type="ChEBI" id="CHEBI:29105"/>
        <note>catalytic</note>
    </ligand>
</feature>
<feature type="binding site" evidence="2">
    <location>
        <position position="388"/>
    </location>
    <ligand>
        <name>Zn(2+)</name>
        <dbReference type="ChEBI" id="CHEBI:29105"/>
        <note>catalytic</note>
    </ligand>
</feature>
<feature type="binding site" evidence="2">
    <location>
        <position position="394"/>
    </location>
    <ligand>
        <name>Zn(2+)</name>
        <dbReference type="ChEBI" id="CHEBI:29105"/>
        <note>catalytic</note>
    </ligand>
</feature>
<feature type="site" description="Cleavage; by furin and PCSK7" evidence="4">
    <location>
        <begin position="213"/>
        <end position="214"/>
    </location>
</feature>
<feature type="modified residue" description="Phosphothreonine" evidence="2">
    <location>
        <position position="720"/>
    </location>
</feature>
<feature type="glycosylation site" description="N-linked (GlcNAc...) asparagine" evidence="5">
    <location>
        <position position="268"/>
    </location>
</feature>
<feature type="glycosylation site" description="N-linked (GlcNAc...) asparagine" evidence="5">
    <location>
        <position position="279"/>
    </location>
</feature>
<feature type="glycosylation site" description="N-linked (GlcNAc...) asparagine" evidence="5">
    <location>
        <position position="440"/>
    </location>
</feature>
<feature type="glycosylation site" description="N-linked (GlcNAc...) asparagine" evidence="5">
    <location>
        <position position="552"/>
    </location>
</feature>
<feature type="disulfide bond" evidence="2">
    <location>
        <begin position="222"/>
        <end position="314"/>
    </location>
</feature>
<feature type="disulfide bond" evidence="2">
    <location>
        <begin position="345"/>
        <end position="452"/>
    </location>
</feature>
<feature type="disulfide bond" evidence="2">
    <location>
        <begin position="400"/>
        <end position="436"/>
    </location>
</feature>
<feature type="disulfide bond" evidence="2">
    <location>
        <begin position="461"/>
        <end position="496"/>
    </location>
</feature>
<feature type="disulfide bond" evidence="2">
    <location>
        <begin position="472"/>
        <end position="485"/>
    </location>
</feature>
<feature type="disulfide bond" evidence="2">
    <location>
        <begin position="474"/>
        <end position="480"/>
    </location>
</feature>
<feature type="disulfide bond" evidence="2">
    <location>
        <begin position="484"/>
        <end position="516"/>
    </location>
</feature>
<feature type="disulfide bond" evidence="2">
    <location>
        <begin position="504"/>
        <end position="512"/>
    </location>
</feature>
<feature type="disulfide bond" evidence="2">
    <location>
        <begin position="511"/>
        <end position="537"/>
    </location>
</feature>
<feature type="disulfide bond" evidence="2">
    <location>
        <begin position="525"/>
        <end position="544"/>
    </location>
</feature>
<feature type="disulfide bond" evidence="2">
    <location>
        <begin position="531"/>
        <end position="563"/>
    </location>
</feature>
<feature type="disulfide bond" evidence="2">
    <location>
        <begin position="556"/>
        <end position="568"/>
    </location>
</feature>
<feature type="disulfide bond" evidence="2">
    <location>
        <begin position="573"/>
        <end position="599"/>
    </location>
</feature>
<feature type="disulfide bond" evidence="2">
    <location>
        <begin position="581"/>
        <end position="608"/>
    </location>
</feature>
<feature type="disulfide bond" evidence="2">
    <location>
        <begin position="583"/>
        <end position="598"/>
    </location>
</feature>
<feature type="disulfide bond" evidence="2">
    <location>
        <begin position="595"/>
        <end position="640"/>
    </location>
</feature>
<feature type="disulfide bond" evidence="2">
    <location>
        <begin position="633"/>
        <end position="646"/>
    </location>
</feature>
<feature type="sequence conflict" description="In Ref. 2; AAC60248." evidence="11" ref="2">
    <original>D</original>
    <variation>G</variation>
    <location>
        <position position="515"/>
    </location>
</feature>
<feature type="sequence conflict" description="In Ref. 2; AAC60248." evidence="11" ref="2">
    <original>S</original>
    <variation>G</variation>
    <location>
        <position position="522"/>
    </location>
</feature>
<feature type="sequence conflict" description="In Ref. 2; AAC60248." evidence="11" ref="2">
    <original>K</original>
    <variation>I</variation>
    <location>
        <position position="604"/>
    </location>
</feature>
<feature type="sequence conflict" description="In Ref. 2; AAC60248." evidence="11" ref="2">
    <original>A</original>
    <variation>V</variation>
    <location>
        <position position="615"/>
    </location>
</feature>
<evidence type="ECO:0000250" key="1"/>
<evidence type="ECO:0000250" key="2">
    <source>
        <dbReference type="UniProtKB" id="O14672"/>
    </source>
</evidence>
<evidence type="ECO:0000250" key="3">
    <source>
        <dbReference type="UniProtKB" id="P03956"/>
    </source>
</evidence>
<evidence type="ECO:0000250" key="4">
    <source>
        <dbReference type="UniProtKB" id="Q10741"/>
    </source>
</evidence>
<evidence type="ECO:0000255" key="5"/>
<evidence type="ECO:0000255" key="6">
    <source>
        <dbReference type="PROSITE-ProRule" id="PRU00068"/>
    </source>
</evidence>
<evidence type="ECO:0000255" key="7">
    <source>
        <dbReference type="PROSITE-ProRule" id="PRU00276"/>
    </source>
</evidence>
<evidence type="ECO:0000255" key="8">
    <source>
        <dbReference type="PROSITE-ProRule" id="PRU10095"/>
    </source>
</evidence>
<evidence type="ECO:0000256" key="9">
    <source>
        <dbReference type="SAM" id="MobiDB-lite"/>
    </source>
</evidence>
<evidence type="ECO:0000269" key="10">
    <source>
    </source>
</evidence>
<evidence type="ECO:0000305" key="11"/>
<reference key="1">
    <citation type="journal article" date="2002" name="J. Cell Biol.">
        <title>The cysteine-rich domain regulates ADAM protease function in vivo.</title>
        <authorList>
            <person name="Smith K.M."/>
            <person name="Gaultier A."/>
            <person name="Cousin H."/>
            <person name="Alfandari D."/>
            <person name="White J.M."/>
            <person name="DeSimone D.W."/>
        </authorList>
    </citation>
    <scope>NUCLEOTIDE SEQUENCE [MRNA]</scope>
</reference>
<reference key="2">
    <citation type="journal article" date="1997" name="Cell">
        <title>Kuzbanian controls proteolytic processing of Notch and mediates lateral inhibition during Drosophila and vertebrate neurogenesis.</title>
        <authorList>
            <person name="Pan D."/>
            <person name="Rubin G.M."/>
        </authorList>
    </citation>
    <scope>NUCLEOTIDE SEQUENCE [MRNA] OF 476-637</scope>
    <scope>FUNCTION</scope>
</reference>
<protein>
    <recommendedName>
        <fullName>Disintegrin and metalloproteinase domain-containing protein 10</fullName>
        <shortName>ADAM 10</shortName>
        <ecNumber evidence="2">3.4.24.81</ecNumber>
    </recommendedName>
    <alternativeName>
        <fullName>Kuzbanian protein homolog</fullName>
        <shortName>xKuz</shortName>
    </alternativeName>
</protein>
<sequence length="749" mass="84068">MGLLRLVFLLSWAASAGGLYGNPLNKYIRHYEGLSYNVDSLHQKHQRAKRAVSQEDQFVHLDFQAHGRQFNLRMKKDTSLFSPDFKLEVGGETVNYDTSHIYTGQLFGEQGTLSHGSVVDGKSKGLLKPLKAHSYVEPSERFFKDQAVPFHSVMYHEDDIKYPHKYGSEGGCADSSVFKRMKEYQMSVQEEPEKHDHKEDHEDSGPVILRKKRAAQAEKNTCQLFIQTDHLFYKRYGETREAVIAQISSHVKAIDTIYQSTDFSGIRNISFMVKRIRINVTSDEKDPTNPFRFPNIGVEKFLELNSEQNHDDYCLAYVFTDRDFDDGVLGLAWVGAPSGSSGGICERNKLYSDGKKKSLNTGIITVQNYGSHVPPKVSHITFAHEVGHNFGSPHDSGNECTPGEAKNLGFKENGNFIMYARTTSGDKLNNNKFSICSVRNISQVLDKKENSCFVESGQPICGNGLVEPGEQCDCGYSDQCKDECCYDANQPENLKCTLKPGKQCSPSQGPCCTTDCTFKRASENCREESDCAKMGTCNGNSAQCPPSEPRENLTECNRATQVCIKGQCSGSICERYDLEECTCGSTDEKDDKELCHVCCMEKMKPHTCASTGSEAWKAYFKGKTITLQPGSPCNEFKGYCDVFMRCRLVDADGPLARLKKAIFNPELYENIAEWIVAHWWAVLLMGIALIMLMAGFIKICSVHTPSSNPKLPPPKPLPGTLKRRRPPQTTQQPSRQRPRENYQMGHMRH</sequence>
<dbReference type="EC" id="3.4.24.81" evidence="2"/>
<dbReference type="EMBL" id="AF508151">
    <property type="protein sequence ID" value="AAM34686.1"/>
    <property type="molecule type" value="mRNA"/>
</dbReference>
<dbReference type="EMBL" id="AF011380">
    <property type="protein sequence ID" value="AAC60248.1"/>
    <property type="molecule type" value="mRNA"/>
</dbReference>
<dbReference type="RefSeq" id="NP_001083912.1">
    <property type="nucleotide sequence ID" value="NM_001090443.1"/>
</dbReference>
<dbReference type="SMR" id="Q8JIY1"/>
<dbReference type="MEROPS" id="M12.210"/>
<dbReference type="GlyCosmos" id="Q8JIY1">
    <property type="glycosylation" value="4 sites, No reported glycans"/>
</dbReference>
<dbReference type="GeneID" id="399187"/>
<dbReference type="KEGG" id="xla:399187"/>
<dbReference type="AGR" id="Xenbase:XB-GENE-945394"/>
<dbReference type="CTD" id="399187"/>
<dbReference type="Xenbase" id="XB-GENE-945394">
    <property type="gene designation" value="adam10.S"/>
</dbReference>
<dbReference type="OrthoDB" id="2149267at2759"/>
<dbReference type="Proteomes" id="UP000186698">
    <property type="component" value="Chromosome 3S"/>
</dbReference>
<dbReference type="Bgee" id="399187">
    <property type="expression patterns" value="Expressed in egg cell and 19 other cell types or tissues"/>
</dbReference>
<dbReference type="GO" id="GO:0009986">
    <property type="term" value="C:cell surface"/>
    <property type="evidence" value="ECO:0000250"/>
    <property type="project" value="UniProtKB"/>
</dbReference>
<dbReference type="GO" id="GO:0005737">
    <property type="term" value="C:cytoplasm"/>
    <property type="evidence" value="ECO:0000250"/>
    <property type="project" value="UniProtKB"/>
</dbReference>
<dbReference type="GO" id="GO:0005794">
    <property type="term" value="C:Golgi apparatus"/>
    <property type="evidence" value="ECO:0000250"/>
    <property type="project" value="UniProtKB"/>
</dbReference>
<dbReference type="GO" id="GO:0005798">
    <property type="term" value="C:Golgi-associated vesicle"/>
    <property type="evidence" value="ECO:0000250"/>
    <property type="project" value="UniProtKB"/>
</dbReference>
<dbReference type="GO" id="GO:0005634">
    <property type="term" value="C:nucleus"/>
    <property type="evidence" value="ECO:0000250"/>
    <property type="project" value="UniProtKB"/>
</dbReference>
<dbReference type="GO" id="GO:0005886">
    <property type="term" value="C:plasma membrane"/>
    <property type="evidence" value="ECO:0000318"/>
    <property type="project" value="GO_Central"/>
</dbReference>
<dbReference type="GO" id="GO:0097060">
    <property type="term" value="C:synaptic membrane"/>
    <property type="evidence" value="ECO:0000318"/>
    <property type="project" value="GO_Central"/>
</dbReference>
<dbReference type="GO" id="GO:0046872">
    <property type="term" value="F:metal ion binding"/>
    <property type="evidence" value="ECO:0007669"/>
    <property type="project" value="UniProtKB-KW"/>
</dbReference>
<dbReference type="GO" id="GO:1902945">
    <property type="term" value="F:metalloendopeptidase activity involved in amyloid precursor protein catabolic process"/>
    <property type="evidence" value="ECO:0000318"/>
    <property type="project" value="GO_Central"/>
</dbReference>
<dbReference type="GO" id="GO:0008237">
    <property type="term" value="F:metallopeptidase activity"/>
    <property type="evidence" value="ECO:0000250"/>
    <property type="project" value="UniProtKB"/>
</dbReference>
<dbReference type="GO" id="GO:0042803">
    <property type="term" value="F:protein homodimerization activity"/>
    <property type="evidence" value="ECO:0000250"/>
    <property type="project" value="UniProtKB"/>
</dbReference>
<dbReference type="GO" id="GO:0019901">
    <property type="term" value="F:protein kinase binding"/>
    <property type="evidence" value="ECO:0000250"/>
    <property type="project" value="UniProtKB"/>
</dbReference>
<dbReference type="GO" id="GO:0017124">
    <property type="term" value="F:SH3 domain binding"/>
    <property type="evidence" value="ECO:0007669"/>
    <property type="project" value="UniProtKB-KW"/>
</dbReference>
<dbReference type="GO" id="GO:0006509">
    <property type="term" value="P:membrane protein ectodomain proteolysis"/>
    <property type="evidence" value="ECO:0000250"/>
    <property type="project" value="UniProtKB"/>
</dbReference>
<dbReference type="GO" id="GO:0007162">
    <property type="term" value="P:negative regulation of cell adhesion"/>
    <property type="evidence" value="ECO:0000250"/>
    <property type="project" value="UniProtKB"/>
</dbReference>
<dbReference type="GO" id="GO:0007219">
    <property type="term" value="P:Notch signaling pathway"/>
    <property type="evidence" value="ECO:0000250"/>
    <property type="project" value="UniProtKB"/>
</dbReference>
<dbReference type="GO" id="GO:0006468">
    <property type="term" value="P:protein phosphorylation"/>
    <property type="evidence" value="ECO:0000250"/>
    <property type="project" value="UniProtKB"/>
</dbReference>
<dbReference type="CDD" id="cd04270">
    <property type="entry name" value="ZnMc_TACE_like"/>
    <property type="match status" value="1"/>
</dbReference>
<dbReference type="FunFam" id="3.40.390.10:FF:000011">
    <property type="entry name" value="Disintegrin and metalloproteinase domain-containing protein 10"/>
    <property type="match status" value="1"/>
</dbReference>
<dbReference type="FunFam" id="4.10.70.10:FF:000002">
    <property type="entry name" value="disintegrin and metalloproteinase domain-containing protein 10"/>
    <property type="match status" value="1"/>
</dbReference>
<dbReference type="Gene3D" id="3.40.390.10">
    <property type="entry name" value="Collagenase (Catalytic Domain)"/>
    <property type="match status" value="1"/>
</dbReference>
<dbReference type="Gene3D" id="4.10.70.10">
    <property type="entry name" value="Disintegrin domain"/>
    <property type="match status" value="1"/>
</dbReference>
<dbReference type="InterPro" id="IPR034025">
    <property type="entry name" value="ADAM10_ADAM17"/>
</dbReference>
<dbReference type="InterPro" id="IPR049038">
    <property type="entry name" value="ADAM10_Cys-rich"/>
</dbReference>
<dbReference type="InterPro" id="IPR051489">
    <property type="entry name" value="ADAM_Metalloproteinase"/>
</dbReference>
<dbReference type="InterPro" id="IPR001762">
    <property type="entry name" value="Disintegrin_dom"/>
</dbReference>
<dbReference type="InterPro" id="IPR036436">
    <property type="entry name" value="Disintegrin_dom_sf"/>
</dbReference>
<dbReference type="InterPro" id="IPR024079">
    <property type="entry name" value="MetalloPept_cat_dom_sf"/>
</dbReference>
<dbReference type="InterPro" id="IPR001590">
    <property type="entry name" value="Peptidase_M12B"/>
</dbReference>
<dbReference type="InterPro" id="IPR002870">
    <property type="entry name" value="Peptidase_M12B_N"/>
</dbReference>
<dbReference type="PANTHER" id="PTHR45702">
    <property type="entry name" value="ADAM10/ADAM17 METALLOPEPTIDASE FAMILY MEMBER"/>
    <property type="match status" value="1"/>
</dbReference>
<dbReference type="PANTHER" id="PTHR45702:SF4">
    <property type="entry name" value="DISINTEGRIN AND METALLOPROTEINASE DOMAIN-CONTAINING PROTEIN 10"/>
    <property type="match status" value="1"/>
</dbReference>
<dbReference type="Pfam" id="PF21299">
    <property type="entry name" value="ADAM10_Cys-rich"/>
    <property type="match status" value="1"/>
</dbReference>
<dbReference type="Pfam" id="PF00200">
    <property type="entry name" value="Disintegrin"/>
    <property type="match status" value="1"/>
</dbReference>
<dbReference type="Pfam" id="PF01562">
    <property type="entry name" value="Pep_M12B_propep"/>
    <property type="match status" value="1"/>
</dbReference>
<dbReference type="Pfam" id="PF13574">
    <property type="entry name" value="Reprolysin_2"/>
    <property type="match status" value="1"/>
</dbReference>
<dbReference type="SMART" id="SM00050">
    <property type="entry name" value="DISIN"/>
    <property type="match status" value="1"/>
</dbReference>
<dbReference type="SUPFAM" id="SSF57552">
    <property type="entry name" value="Blood coagulation inhibitor (disintegrin)"/>
    <property type="match status" value="1"/>
</dbReference>
<dbReference type="SUPFAM" id="SSF55486">
    <property type="entry name" value="Metalloproteases ('zincins'), catalytic domain"/>
    <property type="match status" value="1"/>
</dbReference>
<dbReference type="PROSITE" id="PS50215">
    <property type="entry name" value="ADAM_MEPRO"/>
    <property type="match status" value="1"/>
</dbReference>
<dbReference type="PROSITE" id="PS50214">
    <property type="entry name" value="DISINTEGRIN_2"/>
    <property type="match status" value="1"/>
</dbReference>
<dbReference type="PROSITE" id="PS00142">
    <property type="entry name" value="ZINC_PROTEASE"/>
    <property type="match status" value="1"/>
</dbReference>
<keyword id="KW-0165">Cleavage on pair of basic residues</keyword>
<keyword id="KW-1015">Disulfide bond</keyword>
<keyword id="KW-0325">Glycoprotein</keyword>
<keyword id="KW-0378">Hydrolase</keyword>
<keyword id="KW-0472">Membrane</keyword>
<keyword id="KW-0479">Metal-binding</keyword>
<keyword id="KW-0482">Metalloprotease</keyword>
<keyword id="KW-0914">Notch signaling pathway</keyword>
<keyword id="KW-0597">Phosphoprotein</keyword>
<keyword id="KW-0645">Protease</keyword>
<keyword id="KW-1185">Reference proteome</keyword>
<keyword id="KW-0729">SH3-binding</keyword>
<keyword id="KW-0732">Signal</keyword>
<keyword id="KW-0812">Transmembrane</keyword>
<keyword id="KW-1133">Transmembrane helix</keyword>
<keyword id="KW-0862">Zinc</keyword>
<keyword id="KW-0865">Zymogen</keyword>
<proteinExistence type="evidence at transcript level"/>
<organism>
    <name type="scientific">Xenopus laevis</name>
    <name type="common">African clawed frog</name>
    <dbReference type="NCBI Taxonomy" id="8355"/>
    <lineage>
        <taxon>Eukaryota</taxon>
        <taxon>Metazoa</taxon>
        <taxon>Chordata</taxon>
        <taxon>Craniata</taxon>
        <taxon>Vertebrata</taxon>
        <taxon>Euteleostomi</taxon>
        <taxon>Amphibia</taxon>
        <taxon>Batrachia</taxon>
        <taxon>Anura</taxon>
        <taxon>Pipoidea</taxon>
        <taxon>Pipidae</taxon>
        <taxon>Xenopodinae</taxon>
        <taxon>Xenopus</taxon>
        <taxon>Xenopus</taxon>
    </lineage>
</organism>